<protein>
    <recommendedName>
        <fullName evidence="1">Aminomethyltransferase</fullName>
        <ecNumber evidence="1">2.1.2.10</ecNumber>
    </recommendedName>
    <alternativeName>
        <fullName evidence="1">Glycine cleavage system T protein</fullName>
    </alternativeName>
</protein>
<comment type="function">
    <text evidence="1">The glycine cleavage system catalyzes the degradation of glycine.</text>
</comment>
<comment type="catalytic activity">
    <reaction evidence="1">
        <text>N(6)-[(R)-S(8)-aminomethyldihydrolipoyl]-L-lysyl-[protein] + (6S)-5,6,7,8-tetrahydrofolate = N(6)-[(R)-dihydrolipoyl]-L-lysyl-[protein] + (6R)-5,10-methylene-5,6,7,8-tetrahydrofolate + NH4(+)</text>
        <dbReference type="Rhea" id="RHEA:16945"/>
        <dbReference type="Rhea" id="RHEA-COMP:10475"/>
        <dbReference type="Rhea" id="RHEA-COMP:10492"/>
        <dbReference type="ChEBI" id="CHEBI:15636"/>
        <dbReference type="ChEBI" id="CHEBI:28938"/>
        <dbReference type="ChEBI" id="CHEBI:57453"/>
        <dbReference type="ChEBI" id="CHEBI:83100"/>
        <dbReference type="ChEBI" id="CHEBI:83143"/>
        <dbReference type="EC" id="2.1.2.10"/>
    </reaction>
</comment>
<comment type="subunit">
    <text evidence="1">The glycine cleavage system is composed of four proteins: P, T, L and H.</text>
</comment>
<comment type="similarity">
    <text evidence="1">Belongs to the GcvT family.</text>
</comment>
<accession>A6L6X5</accession>
<evidence type="ECO:0000255" key="1">
    <source>
        <dbReference type="HAMAP-Rule" id="MF_00259"/>
    </source>
</evidence>
<organism>
    <name type="scientific">Phocaeicola vulgatus (strain ATCC 8482 / DSM 1447 / JCM 5826 / CCUG 4940 / NBRC 14291 / NCTC 11154)</name>
    <name type="common">Bacteroides vulgatus</name>
    <dbReference type="NCBI Taxonomy" id="435590"/>
    <lineage>
        <taxon>Bacteria</taxon>
        <taxon>Pseudomonadati</taxon>
        <taxon>Bacteroidota</taxon>
        <taxon>Bacteroidia</taxon>
        <taxon>Bacteroidales</taxon>
        <taxon>Bacteroidaceae</taxon>
        <taxon>Phocaeicola</taxon>
    </lineage>
</organism>
<dbReference type="EC" id="2.1.2.10" evidence="1"/>
<dbReference type="EMBL" id="CP000139">
    <property type="protein sequence ID" value="ABR41439.1"/>
    <property type="molecule type" value="Genomic_DNA"/>
</dbReference>
<dbReference type="RefSeq" id="WP_005841683.1">
    <property type="nucleotide sequence ID" value="NZ_JANSWM010000023.1"/>
</dbReference>
<dbReference type="SMR" id="A6L6X5"/>
<dbReference type="STRING" id="435590.BVU_3828"/>
<dbReference type="PaxDb" id="435590-BVU_3828"/>
<dbReference type="GeneID" id="5304787"/>
<dbReference type="KEGG" id="bvu:BVU_3828"/>
<dbReference type="eggNOG" id="COG0404">
    <property type="taxonomic scope" value="Bacteria"/>
</dbReference>
<dbReference type="HOGENOM" id="CLU_007884_10_2_10"/>
<dbReference type="BioCyc" id="BVUL435590:G1G59-3964-MONOMER"/>
<dbReference type="Proteomes" id="UP000002861">
    <property type="component" value="Chromosome"/>
</dbReference>
<dbReference type="GO" id="GO:0005829">
    <property type="term" value="C:cytosol"/>
    <property type="evidence" value="ECO:0007669"/>
    <property type="project" value="TreeGrafter"/>
</dbReference>
<dbReference type="GO" id="GO:0005960">
    <property type="term" value="C:glycine cleavage complex"/>
    <property type="evidence" value="ECO:0007669"/>
    <property type="project" value="InterPro"/>
</dbReference>
<dbReference type="GO" id="GO:0004047">
    <property type="term" value="F:aminomethyltransferase activity"/>
    <property type="evidence" value="ECO:0007669"/>
    <property type="project" value="UniProtKB-UniRule"/>
</dbReference>
<dbReference type="GO" id="GO:0008483">
    <property type="term" value="F:transaminase activity"/>
    <property type="evidence" value="ECO:0007669"/>
    <property type="project" value="UniProtKB-KW"/>
</dbReference>
<dbReference type="GO" id="GO:0019464">
    <property type="term" value="P:glycine decarboxylation via glycine cleavage system"/>
    <property type="evidence" value="ECO:0007669"/>
    <property type="project" value="UniProtKB-UniRule"/>
</dbReference>
<dbReference type="FunFam" id="2.40.30.110:FF:000003">
    <property type="entry name" value="Aminomethyltransferase"/>
    <property type="match status" value="1"/>
</dbReference>
<dbReference type="FunFam" id="3.30.70.1400:FF:000001">
    <property type="entry name" value="Aminomethyltransferase"/>
    <property type="match status" value="1"/>
</dbReference>
<dbReference type="FunFam" id="4.10.1250.10:FF:000001">
    <property type="entry name" value="Aminomethyltransferase"/>
    <property type="match status" value="1"/>
</dbReference>
<dbReference type="Gene3D" id="2.40.30.110">
    <property type="entry name" value="Aminomethyltransferase beta-barrel domains"/>
    <property type="match status" value="1"/>
</dbReference>
<dbReference type="Gene3D" id="3.30.70.1400">
    <property type="entry name" value="Aminomethyltransferase beta-barrel domains"/>
    <property type="match status" value="1"/>
</dbReference>
<dbReference type="Gene3D" id="4.10.1250.10">
    <property type="entry name" value="Aminomethyltransferase fragment"/>
    <property type="match status" value="1"/>
</dbReference>
<dbReference type="Gene3D" id="3.30.1360.120">
    <property type="entry name" value="Probable tRNA modification gtpase trme, domain 1"/>
    <property type="match status" value="1"/>
</dbReference>
<dbReference type="HAMAP" id="MF_00259">
    <property type="entry name" value="GcvT"/>
    <property type="match status" value="1"/>
</dbReference>
<dbReference type="InterPro" id="IPR006223">
    <property type="entry name" value="GCS_T"/>
</dbReference>
<dbReference type="InterPro" id="IPR022903">
    <property type="entry name" value="GCS_T_bac"/>
</dbReference>
<dbReference type="InterPro" id="IPR013977">
    <property type="entry name" value="GCST_C"/>
</dbReference>
<dbReference type="InterPro" id="IPR006222">
    <property type="entry name" value="GCV_T_N"/>
</dbReference>
<dbReference type="InterPro" id="IPR028896">
    <property type="entry name" value="GcvT/YgfZ/DmdA"/>
</dbReference>
<dbReference type="InterPro" id="IPR029043">
    <property type="entry name" value="GcvT/YgfZ_C"/>
</dbReference>
<dbReference type="InterPro" id="IPR027266">
    <property type="entry name" value="TrmE/GcvT_dom1"/>
</dbReference>
<dbReference type="NCBIfam" id="TIGR00528">
    <property type="entry name" value="gcvT"/>
    <property type="match status" value="1"/>
</dbReference>
<dbReference type="NCBIfam" id="NF001567">
    <property type="entry name" value="PRK00389.1"/>
    <property type="match status" value="1"/>
</dbReference>
<dbReference type="PANTHER" id="PTHR43757">
    <property type="entry name" value="AMINOMETHYLTRANSFERASE"/>
    <property type="match status" value="1"/>
</dbReference>
<dbReference type="PANTHER" id="PTHR43757:SF2">
    <property type="entry name" value="AMINOMETHYLTRANSFERASE, MITOCHONDRIAL"/>
    <property type="match status" value="1"/>
</dbReference>
<dbReference type="Pfam" id="PF01571">
    <property type="entry name" value="GCV_T"/>
    <property type="match status" value="1"/>
</dbReference>
<dbReference type="Pfam" id="PF08669">
    <property type="entry name" value="GCV_T_C"/>
    <property type="match status" value="1"/>
</dbReference>
<dbReference type="PIRSF" id="PIRSF006487">
    <property type="entry name" value="GcvT"/>
    <property type="match status" value="1"/>
</dbReference>
<dbReference type="SUPFAM" id="SSF101790">
    <property type="entry name" value="Aminomethyltransferase beta-barrel domain"/>
    <property type="match status" value="1"/>
</dbReference>
<dbReference type="SUPFAM" id="SSF103025">
    <property type="entry name" value="Folate-binding domain"/>
    <property type="match status" value="1"/>
</dbReference>
<feature type="chain" id="PRO_1000047646" description="Aminomethyltransferase">
    <location>
        <begin position="1"/>
        <end position="361"/>
    </location>
</feature>
<reference key="1">
    <citation type="journal article" date="2007" name="PLoS Biol.">
        <title>Evolution of symbiotic bacteria in the distal human intestine.</title>
        <authorList>
            <person name="Xu J."/>
            <person name="Mahowald M.A."/>
            <person name="Ley R.E."/>
            <person name="Lozupone C.A."/>
            <person name="Hamady M."/>
            <person name="Martens E.C."/>
            <person name="Henrissat B."/>
            <person name="Coutinho P.M."/>
            <person name="Minx P."/>
            <person name="Latreille P."/>
            <person name="Cordum H."/>
            <person name="Van Brunt A."/>
            <person name="Kim K."/>
            <person name="Fulton R.S."/>
            <person name="Fulton L.A."/>
            <person name="Clifton S.W."/>
            <person name="Wilson R.K."/>
            <person name="Knight R.D."/>
            <person name="Gordon J.I."/>
        </authorList>
    </citation>
    <scope>NUCLEOTIDE SEQUENCE [LARGE SCALE GENOMIC DNA]</scope>
    <source>
        <strain>ATCC 8482 / DSM 1447 / JCM 5826 / CCUG 4940 / NBRC 14291 / NCTC 11154</strain>
    </source>
</reference>
<sequence length="361" mass="39663">MKTTPFTETHIALGAKMHEFAGYNMPIEYSGIIDEHLTVCNAVGVFDVSHMGEFWVKGPNALEFLQQVTSNNVATLPVGKAQYTCFPNEEGGIVDDLLVYHYESEKYLLVVNAANIEKDWNWCVSHNTVGAELENASDRMAQLAIQGPKAMEVLQKLTPVNLSEIPYYAFTTGEFAGQKDVIISNTGYTGAGGFELYFYPEAGQAIWKAIFEAGAPEGIKPIGLGARDTLRLEMGFCLYGNDLSDTTSPLEAGLGWITKFVEGKNFTSRALLEKQKAEGLKRKLIAFEMVDRGIPRHGYELVNADGEKIGEVTSGTMSPMRKIGIGMGYVQTAYTALGTEIFIDVRGRKLKAVVVKAPFRK</sequence>
<gene>
    <name evidence="1" type="primary">gcvT</name>
    <name type="ordered locus">BVU_3828</name>
</gene>
<proteinExistence type="inferred from homology"/>
<keyword id="KW-0032">Aminotransferase</keyword>
<keyword id="KW-0808">Transferase</keyword>
<name>GCST_PHOV8</name>